<feature type="chain" id="PRO_0000374997" description="Ribosomal protein uS12 methylthiotransferase RimO">
    <location>
        <begin position="1"/>
        <end position="441"/>
    </location>
</feature>
<feature type="domain" description="MTTase N-terminal" evidence="1">
    <location>
        <begin position="8"/>
        <end position="118"/>
    </location>
</feature>
<feature type="domain" description="Radical SAM core" evidence="2">
    <location>
        <begin position="136"/>
        <end position="373"/>
    </location>
</feature>
<feature type="domain" description="TRAM" evidence="1">
    <location>
        <begin position="376"/>
        <end position="441"/>
    </location>
</feature>
<feature type="binding site" evidence="1">
    <location>
        <position position="17"/>
    </location>
    <ligand>
        <name>[4Fe-4S] cluster</name>
        <dbReference type="ChEBI" id="CHEBI:49883"/>
        <label>1</label>
    </ligand>
</feature>
<feature type="binding site" evidence="1">
    <location>
        <position position="53"/>
    </location>
    <ligand>
        <name>[4Fe-4S] cluster</name>
        <dbReference type="ChEBI" id="CHEBI:49883"/>
        <label>1</label>
    </ligand>
</feature>
<feature type="binding site" evidence="1">
    <location>
        <position position="82"/>
    </location>
    <ligand>
        <name>[4Fe-4S] cluster</name>
        <dbReference type="ChEBI" id="CHEBI:49883"/>
        <label>1</label>
    </ligand>
</feature>
<feature type="binding site" evidence="1">
    <location>
        <position position="150"/>
    </location>
    <ligand>
        <name>[4Fe-4S] cluster</name>
        <dbReference type="ChEBI" id="CHEBI:49883"/>
        <label>2</label>
        <note>4Fe-4S-S-AdoMet</note>
    </ligand>
</feature>
<feature type="binding site" evidence="1">
    <location>
        <position position="154"/>
    </location>
    <ligand>
        <name>[4Fe-4S] cluster</name>
        <dbReference type="ChEBI" id="CHEBI:49883"/>
        <label>2</label>
        <note>4Fe-4S-S-AdoMet</note>
    </ligand>
</feature>
<feature type="binding site" evidence="1">
    <location>
        <position position="157"/>
    </location>
    <ligand>
        <name>[4Fe-4S] cluster</name>
        <dbReference type="ChEBI" id="CHEBI:49883"/>
        <label>2</label>
        <note>4Fe-4S-S-AdoMet</note>
    </ligand>
</feature>
<protein>
    <recommendedName>
        <fullName evidence="1">Ribosomal protein uS12 methylthiotransferase RimO</fullName>
        <shortName evidence="1">uS12 MTTase</shortName>
        <shortName evidence="1">uS12 methylthiotransferase</shortName>
        <ecNumber evidence="1">2.8.4.4</ecNumber>
    </recommendedName>
    <alternativeName>
        <fullName evidence="1">Ribosomal protein uS12 (aspartate-C(3))-methylthiotransferase</fullName>
    </alternativeName>
    <alternativeName>
        <fullName evidence="1">Ribosome maturation factor RimO</fullName>
    </alternativeName>
</protein>
<gene>
    <name evidence="1" type="primary">rimO</name>
    <name type="ordered locus">STY0891</name>
    <name type="ordered locus">t2037</name>
</gene>
<organism>
    <name type="scientific">Salmonella typhi</name>
    <dbReference type="NCBI Taxonomy" id="90370"/>
    <lineage>
        <taxon>Bacteria</taxon>
        <taxon>Pseudomonadati</taxon>
        <taxon>Pseudomonadota</taxon>
        <taxon>Gammaproteobacteria</taxon>
        <taxon>Enterobacterales</taxon>
        <taxon>Enterobacteriaceae</taxon>
        <taxon>Salmonella</taxon>
    </lineage>
</organism>
<name>RIMO_SALTI</name>
<accession>Q8Z861</accession>
<accession>Q7C8T9</accession>
<sequence length="441" mass="49610">MSNVTHQPKIGFVSLGCPKNLVDSERILTELRTEGYDVVPHYDDADMVIVNTCGFIDSAVQESLEAIGEALNENGKVIVTGCLGAKEDQIREVHPKVLEITGPHSYEQVLQHVHHYVPKPKHNPFLSLVPEQGVKLTPRHYAYLKISEGCNHRCTFCIIPSMRGDLVSRPIGDVLSEAKRLVDAGVKEILVISQDTSAYGVDVKHRTGFHNGEPMKTSMVSLCEQLSKLGVWTRLHYVYPYPHVDDVIPLMAEGKILPYLDIPLQHASPRILKLMKRPGSVDRQLARIKQWREICPELTLRSTFIVGFPGETEEDFQMLLDFLKEARLDRVGCFKYSPVEGAGANELPDQVPEEVKEERWNRFMQLQQQISAERLQEKVGREILVIVDEVDEEGAIGRSMADAPEIDGAVYLNGETNVKPGDIVRVKVENADEYDLWGSRV</sequence>
<proteinExistence type="inferred from homology"/>
<dbReference type="EC" id="2.8.4.4" evidence="1"/>
<dbReference type="EMBL" id="AE014613">
    <property type="protein sequence ID" value="AAO69649.1"/>
    <property type="molecule type" value="Genomic_DNA"/>
</dbReference>
<dbReference type="EMBL" id="AL513382">
    <property type="protein sequence ID" value="CAD05298.1"/>
    <property type="molecule type" value="Genomic_DNA"/>
</dbReference>
<dbReference type="RefSeq" id="NP_455386.1">
    <property type="nucleotide sequence ID" value="NC_003198.1"/>
</dbReference>
<dbReference type="RefSeq" id="WP_000073304.1">
    <property type="nucleotide sequence ID" value="NZ_WSUR01000019.1"/>
</dbReference>
<dbReference type="SMR" id="Q8Z861"/>
<dbReference type="STRING" id="220341.gene:17584888"/>
<dbReference type="KEGG" id="stt:t2037"/>
<dbReference type="KEGG" id="sty:STY0891"/>
<dbReference type="PATRIC" id="fig|220341.7.peg.900"/>
<dbReference type="eggNOG" id="COG0621">
    <property type="taxonomic scope" value="Bacteria"/>
</dbReference>
<dbReference type="HOGENOM" id="CLU_018697_0_0_6"/>
<dbReference type="OMA" id="HYAYPTG"/>
<dbReference type="OrthoDB" id="9805215at2"/>
<dbReference type="Proteomes" id="UP000000541">
    <property type="component" value="Chromosome"/>
</dbReference>
<dbReference type="Proteomes" id="UP000002670">
    <property type="component" value="Chromosome"/>
</dbReference>
<dbReference type="GO" id="GO:0005829">
    <property type="term" value="C:cytosol"/>
    <property type="evidence" value="ECO:0007669"/>
    <property type="project" value="TreeGrafter"/>
</dbReference>
<dbReference type="GO" id="GO:0051539">
    <property type="term" value="F:4 iron, 4 sulfur cluster binding"/>
    <property type="evidence" value="ECO:0007669"/>
    <property type="project" value="UniProtKB-UniRule"/>
</dbReference>
<dbReference type="GO" id="GO:0035599">
    <property type="term" value="F:aspartic acid methylthiotransferase activity"/>
    <property type="evidence" value="ECO:0007669"/>
    <property type="project" value="TreeGrafter"/>
</dbReference>
<dbReference type="GO" id="GO:0046872">
    <property type="term" value="F:metal ion binding"/>
    <property type="evidence" value="ECO:0007669"/>
    <property type="project" value="UniProtKB-KW"/>
</dbReference>
<dbReference type="GO" id="GO:0103039">
    <property type="term" value="F:protein methylthiotransferase activity"/>
    <property type="evidence" value="ECO:0007669"/>
    <property type="project" value="UniProtKB-EC"/>
</dbReference>
<dbReference type="GO" id="GO:0006400">
    <property type="term" value="P:tRNA modification"/>
    <property type="evidence" value="ECO:0007669"/>
    <property type="project" value="InterPro"/>
</dbReference>
<dbReference type="CDD" id="cd01335">
    <property type="entry name" value="Radical_SAM"/>
    <property type="match status" value="1"/>
</dbReference>
<dbReference type="FunFam" id="2.40.50.140:FF:000060">
    <property type="entry name" value="Ribosomal protein S12 methylthiotransferase RimO"/>
    <property type="match status" value="1"/>
</dbReference>
<dbReference type="FunFam" id="3.40.50.12160:FF:000002">
    <property type="entry name" value="Ribosomal protein S12 methylthiotransferase RimO"/>
    <property type="match status" value="1"/>
</dbReference>
<dbReference type="FunFam" id="3.80.30.20:FF:000001">
    <property type="entry name" value="tRNA-2-methylthio-N(6)-dimethylallyladenosine synthase 2"/>
    <property type="match status" value="1"/>
</dbReference>
<dbReference type="Gene3D" id="3.40.50.12160">
    <property type="entry name" value="Methylthiotransferase, N-terminal domain"/>
    <property type="match status" value="1"/>
</dbReference>
<dbReference type="Gene3D" id="2.40.50.140">
    <property type="entry name" value="Nucleic acid-binding proteins"/>
    <property type="match status" value="1"/>
</dbReference>
<dbReference type="Gene3D" id="3.80.30.20">
    <property type="entry name" value="tm_1862 like domain"/>
    <property type="match status" value="1"/>
</dbReference>
<dbReference type="HAMAP" id="MF_01865">
    <property type="entry name" value="MTTase_RimO"/>
    <property type="match status" value="1"/>
</dbReference>
<dbReference type="InterPro" id="IPR006638">
    <property type="entry name" value="Elp3/MiaA/NifB-like_rSAM"/>
</dbReference>
<dbReference type="InterPro" id="IPR005839">
    <property type="entry name" value="Methylthiotransferase"/>
</dbReference>
<dbReference type="InterPro" id="IPR020612">
    <property type="entry name" value="Methylthiotransferase_CS"/>
</dbReference>
<dbReference type="InterPro" id="IPR013848">
    <property type="entry name" value="Methylthiotransferase_N"/>
</dbReference>
<dbReference type="InterPro" id="IPR038135">
    <property type="entry name" value="Methylthiotransferase_N_sf"/>
</dbReference>
<dbReference type="InterPro" id="IPR012340">
    <property type="entry name" value="NA-bd_OB-fold"/>
</dbReference>
<dbReference type="InterPro" id="IPR005840">
    <property type="entry name" value="Ribosomal_uS12_MeSTrfase_RimO"/>
</dbReference>
<dbReference type="InterPro" id="IPR007197">
    <property type="entry name" value="rSAM"/>
</dbReference>
<dbReference type="InterPro" id="IPR023404">
    <property type="entry name" value="rSAM_horseshoe"/>
</dbReference>
<dbReference type="InterPro" id="IPR002792">
    <property type="entry name" value="TRAM_dom"/>
</dbReference>
<dbReference type="NCBIfam" id="TIGR01125">
    <property type="entry name" value="30S ribosomal protein S12 methylthiotransferase RimO"/>
    <property type="match status" value="1"/>
</dbReference>
<dbReference type="NCBIfam" id="TIGR00089">
    <property type="entry name" value="MiaB/RimO family radical SAM methylthiotransferase"/>
    <property type="match status" value="1"/>
</dbReference>
<dbReference type="PANTHER" id="PTHR43837">
    <property type="entry name" value="RIBOSOMAL PROTEIN S12 METHYLTHIOTRANSFERASE RIMO"/>
    <property type="match status" value="1"/>
</dbReference>
<dbReference type="PANTHER" id="PTHR43837:SF1">
    <property type="entry name" value="RIBOSOMAL PROTEIN US12 METHYLTHIOTRANSFERASE RIMO"/>
    <property type="match status" value="1"/>
</dbReference>
<dbReference type="Pfam" id="PF04055">
    <property type="entry name" value="Radical_SAM"/>
    <property type="match status" value="1"/>
</dbReference>
<dbReference type="Pfam" id="PF18693">
    <property type="entry name" value="TRAM_2"/>
    <property type="match status" value="1"/>
</dbReference>
<dbReference type="Pfam" id="PF00919">
    <property type="entry name" value="UPF0004"/>
    <property type="match status" value="1"/>
</dbReference>
<dbReference type="SFLD" id="SFLDG01082">
    <property type="entry name" value="B12-binding_domain_containing"/>
    <property type="match status" value="1"/>
</dbReference>
<dbReference type="SFLD" id="SFLDG01061">
    <property type="entry name" value="methylthiotransferase"/>
    <property type="match status" value="1"/>
</dbReference>
<dbReference type="SFLD" id="SFLDF00274">
    <property type="entry name" value="ribosomal_protein_S12_methylth"/>
    <property type="match status" value="1"/>
</dbReference>
<dbReference type="SMART" id="SM00729">
    <property type="entry name" value="Elp3"/>
    <property type="match status" value="1"/>
</dbReference>
<dbReference type="SUPFAM" id="SSF102114">
    <property type="entry name" value="Radical SAM enzymes"/>
    <property type="match status" value="1"/>
</dbReference>
<dbReference type="PROSITE" id="PS51449">
    <property type="entry name" value="MTTASE_N"/>
    <property type="match status" value="1"/>
</dbReference>
<dbReference type="PROSITE" id="PS01278">
    <property type="entry name" value="MTTASE_RADICAL"/>
    <property type="match status" value="1"/>
</dbReference>
<dbReference type="PROSITE" id="PS51918">
    <property type="entry name" value="RADICAL_SAM"/>
    <property type="match status" value="1"/>
</dbReference>
<dbReference type="PROSITE" id="PS50926">
    <property type="entry name" value="TRAM"/>
    <property type="match status" value="1"/>
</dbReference>
<keyword id="KW-0004">4Fe-4S</keyword>
<keyword id="KW-0963">Cytoplasm</keyword>
<keyword id="KW-0408">Iron</keyword>
<keyword id="KW-0411">Iron-sulfur</keyword>
<keyword id="KW-0479">Metal-binding</keyword>
<keyword id="KW-0949">S-adenosyl-L-methionine</keyword>
<keyword id="KW-0808">Transferase</keyword>
<reference key="1">
    <citation type="journal article" date="2001" name="Nature">
        <title>Complete genome sequence of a multiple drug resistant Salmonella enterica serovar Typhi CT18.</title>
        <authorList>
            <person name="Parkhill J."/>
            <person name="Dougan G."/>
            <person name="James K.D."/>
            <person name="Thomson N.R."/>
            <person name="Pickard D."/>
            <person name="Wain J."/>
            <person name="Churcher C.M."/>
            <person name="Mungall K.L."/>
            <person name="Bentley S.D."/>
            <person name="Holden M.T.G."/>
            <person name="Sebaihia M."/>
            <person name="Baker S."/>
            <person name="Basham D."/>
            <person name="Brooks K."/>
            <person name="Chillingworth T."/>
            <person name="Connerton P."/>
            <person name="Cronin A."/>
            <person name="Davis P."/>
            <person name="Davies R.M."/>
            <person name="Dowd L."/>
            <person name="White N."/>
            <person name="Farrar J."/>
            <person name="Feltwell T."/>
            <person name="Hamlin N."/>
            <person name="Haque A."/>
            <person name="Hien T.T."/>
            <person name="Holroyd S."/>
            <person name="Jagels K."/>
            <person name="Krogh A."/>
            <person name="Larsen T.S."/>
            <person name="Leather S."/>
            <person name="Moule S."/>
            <person name="O'Gaora P."/>
            <person name="Parry C."/>
            <person name="Quail M.A."/>
            <person name="Rutherford K.M."/>
            <person name="Simmonds M."/>
            <person name="Skelton J."/>
            <person name="Stevens K."/>
            <person name="Whitehead S."/>
            <person name="Barrell B.G."/>
        </authorList>
    </citation>
    <scope>NUCLEOTIDE SEQUENCE [LARGE SCALE GENOMIC DNA]</scope>
    <source>
        <strain>CT18</strain>
    </source>
</reference>
<reference key="2">
    <citation type="journal article" date="2003" name="J. Bacteriol.">
        <title>Comparative genomics of Salmonella enterica serovar Typhi strains Ty2 and CT18.</title>
        <authorList>
            <person name="Deng W."/>
            <person name="Liou S.-R."/>
            <person name="Plunkett G. III"/>
            <person name="Mayhew G.F."/>
            <person name="Rose D.J."/>
            <person name="Burland V."/>
            <person name="Kodoyianni V."/>
            <person name="Schwartz D.C."/>
            <person name="Blattner F.R."/>
        </authorList>
    </citation>
    <scope>NUCLEOTIDE SEQUENCE [LARGE SCALE GENOMIC DNA]</scope>
    <source>
        <strain>ATCC 700931 / Ty2</strain>
    </source>
</reference>
<evidence type="ECO:0000255" key="1">
    <source>
        <dbReference type="HAMAP-Rule" id="MF_01865"/>
    </source>
</evidence>
<evidence type="ECO:0000255" key="2">
    <source>
        <dbReference type="PROSITE-ProRule" id="PRU01266"/>
    </source>
</evidence>
<comment type="function">
    <text evidence="1">Catalyzes the methylthiolation of an aspartic acid residue of ribosomal protein uS12.</text>
</comment>
<comment type="catalytic activity">
    <reaction evidence="1">
        <text>L-aspartate(89)-[ribosomal protein uS12]-hydrogen + (sulfur carrier)-SH + AH2 + 2 S-adenosyl-L-methionine = 3-methylsulfanyl-L-aspartate(89)-[ribosomal protein uS12]-hydrogen + (sulfur carrier)-H + 5'-deoxyadenosine + L-methionine + A + S-adenosyl-L-homocysteine + 2 H(+)</text>
        <dbReference type="Rhea" id="RHEA:37087"/>
        <dbReference type="Rhea" id="RHEA-COMP:10460"/>
        <dbReference type="Rhea" id="RHEA-COMP:10461"/>
        <dbReference type="Rhea" id="RHEA-COMP:14737"/>
        <dbReference type="Rhea" id="RHEA-COMP:14739"/>
        <dbReference type="ChEBI" id="CHEBI:13193"/>
        <dbReference type="ChEBI" id="CHEBI:15378"/>
        <dbReference type="ChEBI" id="CHEBI:17319"/>
        <dbReference type="ChEBI" id="CHEBI:17499"/>
        <dbReference type="ChEBI" id="CHEBI:29917"/>
        <dbReference type="ChEBI" id="CHEBI:29961"/>
        <dbReference type="ChEBI" id="CHEBI:57844"/>
        <dbReference type="ChEBI" id="CHEBI:57856"/>
        <dbReference type="ChEBI" id="CHEBI:59789"/>
        <dbReference type="ChEBI" id="CHEBI:64428"/>
        <dbReference type="ChEBI" id="CHEBI:73599"/>
        <dbReference type="EC" id="2.8.4.4"/>
    </reaction>
</comment>
<comment type="cofactor">
    <cofactor evidence="1">
        <name>[4Fe-4S] cluster</name>
        <dbReference type="ChEBI" id="CHEBI:49883"/>
    </cofactor>
    <text evidence="1">Binds 2 [4Fe-4S] clusters. One cluster is coordinated with 3 cysteines and an exchangeable S-adenosyl-L-methionine.</text>
</comment>
<comment type="subcellular location">
    <subcellularLocation>
        <location evidence="1">Cytoplasm</location>
    </subcellularLocation>
</comment>
<comment type="similarity">
    <text evidence="1">Belongs to the methylthiotransferase family. RimO subfamily.</text>
</comment>